<gene>
    <name evidence="3" type="primary">mlpJ</name>
    <name type="ordered locus">BB_Q35</name>
</gene>
<organism>
    <name type="scientific">Borreliella burgdorferi (strain ATCC 35210 / DSM 4680 / CIP 102532 / B31)</name>
    <name type="common">Borrelia burgdorferi</name>
    <dbReference type="NCBI Taxonomy" id="224326"/>
    <lineage>
        <taxon>Bacteria</taxon>
        <taxon>Pseudomonadati</taxon>
        <taxon>Spirochaetota</taxon>
        <taxon>Spirochaetia</taxon>
        <taxon>Spirochaetales</taxon>
        <taxon>Borreliaceae</taxon>
        <taxon>Borreliella</taxon>
    </lineage>
</organism>
<name>MLPJ_BORBU</name>
<comment type="function">
    <text evidence="2 5">An outer membrane protein that may participate in pathogenesis. Some human Lyme disease patients have antibodies against this protein (PubMed:10948116). The Mlp proteins probably undergo intragenic recombination, generating new alleles (Probable).</text>
</comment>
<comment type="subcellular location">
    <subcellularLocation>
        <location evidence="5">Cell outer membrane</location>
        <topology evidence="5">Lipid-anchor</topology>
    </subcellularLocation>
</comment>
<comment type="induction">
    <text evidence="2">Weakly induced when grown at 35 degrees Celsius.</text>
</comment>
<comment type="similarity">
    <text evidence="4">Belongs to the Multicopy lipoprotein (Mlp) family.</text>
</comment>
<evidence type="ECO:0000256" key="1">
    <source>
        <dbReference type="SAM" id="MobiDB-lite"/>
    </source>
</evidence>
<evidence type="ECO:0000269" key="2">
    <source>
    </source>
</evidence>
<evidence type="ECO:0000303" key="3">
    <source>
    </source>
</evidence>
<evidence type="ECO:0000305" key="4"/>
<evidence type="ECO:0000305" key="5">
    <source>
    </source>
</evidence>
<sequence length="203" mass="23578">MKIINILFCISLLLLNSCNSNDNDTLKNNAQQTKSRKKRDLSQEELPQQEKITLTSDEEKMFTSLINVFKYTIEKLNNEIQGCMNGNKSKCNDFFDWLSEDIQKQKELAGAFTKVYNFLKSKAQNETFDTYIKGAIDCKKNTPQDCNKNNKYGDGDNLIEQYFRGVANDMSNRNSNEEIYQYLKDELLKEDNHYAGLTANWQN</sequence>
<keyword id="KW-0998">Cell outer membrane</keyword>
<keyword id="KW-0449">Lipoprotein</keyword>
<keyword id="KW-0472">Membrane</keyword>
<keyword id="KW-0564">Palmitate</keyword>
<keyword id="KW-0614">Plasmid</keyword>
<keyword id="KW-1185">Reference proteome</keyword>
<keyword id="KW-0732">Signal</keyword>
<dbReference type="EMBL" id="AE001584">
    <property type="protein sequence ID" value="AAF07724.1"/>
    <property type="molecule type" value="Genomic_DNA"/>
</dbReference>
<dbReference type="RefSeq" id="NP_051497.1">
    <property type="nucleotide sequence ID" value="NC_000956.1"/>
</dbReference>
<dbReference type="RefSeq" id="WP_010883917.1">
    <property type="nucleotide sequence ID" value="NC_000956.1"/>
</dbReference>
<dbReference type="EnsemblBacteria" id="AAF07724">
    <property type="protein sequence ID" value="AAF07724"/>
    <property type="gene ID" value="BB_Q35"/>
</dbReference>
<dbReference type="KEGG" id="bbu:BB_Q35"/>
<dbReference type="PATRIC" id="fig|224326.49.peg.351"/>
<dbReference type="HOGENOM" id="CLU_105327_1_0_12"/>
<dbReference type="OrthoDB" id="352284at2"/>
<dbReference type="Proteomes" id="UP000001807">
    <property type="component" value="Plasmid lp56"/>
</dbReference>
<dbReference type="GO" id="GO:0009279">
    <property type="term" value="C:cell outer membrane"/>
    <property type="evidence" value="ECO:0007669"/>
    <property type="project" value="UniProtKB-SubCell"/>
</dbReference>
<dbReference type="InterPro" id="IPR004983">
    <property type="entry name" value="Mlp"/>
</dbReference>
<dbReference type="Pfam" id="PF03304">
    <property type="entry name" value="Mlp"/>
    <property type="match status" value="1"/>
</dbReference>
<protein>
    <recommendedName>
        <fullName evidence="3">Lipoprotein MlpJ</fullName>
    </recommendedName>
</protein>
<reference key="1">
    <citation type="journal article" date="1997" name="Nature">
        <title>Genomic sequence of a Lyme disease spirochaete, Borrelia burgdorferi.</title>
        <authorList>
            <person name="Fraser C.M."/>
            <person name="Casjens S."/>
            <person name="Huang W.M."/>
            <person name="Sutton G.G."/>
            <person name="Clayton R.A."/>
            <person name="Lathigra R."/>
            <person name="White O."/>
            <person name="Ketchum K.A."/>
            <person name="Dodson R.J."/>
            <person name="Hickey E.K."/>
            <person name="Gwinn M.L."/>
            <person name="Dougherty B.A."/>
            <person name="Tomb J.-F."/>
            <person name="Fleischmann R.D."/>
            <person name="Richardson D.L."/>
            <person name="Peterson J.D."/>
            <person name="Kerlavage A.R."/>
            <person name="Quackenbush J."/>
            <person name="Salzberg S.L."/>
            <person name="Hanson M."/>
            <person name="van Vugt R."/>
            <person name="Palmer N."/>
            <person name="Adams M.D."/>
            <person name="Gocayne J.D."/>
            <person name="Weidman J.F."/>
            <person name="Utterback T.R."/>
            <person name="Watthey L."/>
            <person name="McDonald L.A."/>
            <person name="Artiach P."/>
            <person name="Bowman C."/>
            <person name="Garland S.A."/>
            <person name="Fujii C."/>
            <person name="Cotton M.D."/>
            <person name="Horst K."/>
            <person name="Roberts K.M."/>
            <person name="Hatch B."/>
            <person name="Smith H.O."/>
            <person name="Venter J.C."/>
        </authorList>
    </citation>
    <scope>NUCLEOTIDE SEQUENCE [LARGE SCALE GENOMIC DNA]</scope>
    <source>
        <strain>ATCC 35210 / DSM 4680 / CIP 102532 / B31</strain>
    </source>
</reference>
<reference key="2">
    <citation type="journal article" date="2000" name="Mol. Microbiol.">
        <title>A bacterial genome in flux: the twelve linear and nine circular extrachromosomal DNAs in an infectious isolate of the Lyme disease spirochete Borrelia burgdorferi.</title>
        <authorList>
            <person name="Casjens S."/>
            <person name="Palmer N."/>
            <person name="van Vugt R."/>
            <person name="Huang W.M."/>
            <person name="Stevenson B."/>
            <person name="Rosa P."/>
            <person name="Lathigra R."/>
            <person name="Sutton G.G."/>
            <person name="Peterson J.D."/>
            <person name="Dodson R.J."/>
            <person name="Haft D.H."/>
            <person name="Hickey E.K."/>
            <person name="Gwinn M.L."/>
            <person name="White O."/>
            <person name="Fraser C.M."/>
        </authorList>
    </citation>
    <scope>NUCLEOTIDE SEQUENCE [LARGE SCALE GENOMIC DNA]</scope>
    <source>
        <strain>ATCC 35210 / DSM 4680 / CIP 102532 / B31</strain>
    </source>
</reference>
<reference key="3">
    <citation type="journal article" date="2000" name="Infect. Immun.">
        <title>Expression and immunological analysis of the plasmid-borne mlp genes of Borrelia burgdorferi strain B31.</title>
        <authorList>
            <person name="Porcella S.F."/>
            <person name="Fitzpatrick C.A."/>
            <person name="Bono J.L."/>
        </authorList>
    </citation>
    <scope>FUNCTION</scope>
    <scope>ANTIGENICITY</scope>
    <scope>SUBCELLULAR LOCATION</scope>
    <scope>INDUCTION AT 35 DEGREES CELSIUS</scope>
    <source>
        <strain>B31-4A</strain>
        <plasmid>lp56</plasmid>
    </source>
</reference>
<feature type="signal peptide" evidence="4">
    <location>
        <begin position="1"/>
        <end position="17"/>
    </location>
</feature>
<feature type="chain" id="PRO_5004331804" description="Lipoprotein MlpJ" evidence="4">
    <location>
        <begin position="18"/>
        <end position="203"/>
    </location>
</feature>
<feature type="region of interest" description="Disordered" evidence="1">
    <location>
        <begin position="26"/>
        <end position="47"/>
    </location>
</feature>
<feature type="lipid moiety-binding region" description="N-palmitoyl cysteine" evidence="4">
    <location>
        <position position="18"/>
    </location>
</feature>
<feature type="lipid moiety-binding region" description="S-diacylglycerol cysteine" evidence="4">
    <location>
        <position position="18"/>
    </location>
</feature>
<proteinExistence type="evidence at transcript level"/>
<accession>Q9RZZ0</accession>
<geneLocation type="plasmid">
    <name>lp56</name>
</geneLocation>